<proteinExistence type="inferred from homology"/>
<reference key="1">
    <citation type="journal article" date="2010" name="Environ. Microbiol.">
        <title>The genome of Syntrophomonas wolfei: new insights into syntrophic metabolism and biohydrogen production.</title>
        <authorList>
            <person name="Sieber J.R."/>
            <person name="Sims D.R."/>
            <person name="Han C."/>
            <person name="Kim E."/>
            <person name="Lykidis A."/>
            <person name="Lapidus A.L."/>
            <person name="McDonnald E."/>
            <person name="Rohlin L."/>
            <person name="Culley D.E."/>
            <person name="Gunsalus R."/>
            <person name="McInerney M.J."/>
        </authorList>
    </citation>
    <scope>NUCLEOTIDE SEQUENCE [LARGE SCALE GENOMIC DNA]</scope>
    <source>
        <strain>DSM 2245B / Goettingen</strain>
    </source>
</reference>
<accession>Q0AWX5</accession>
<name>FOLD2_SYNWW</name>
<sequence>MLIYGKDIREQIKERVRQSAEEVKMGLAIIRVGDDPSSMAYVRGIRKFAEETGVKVEIVNLPDAVGERELLKTIGDLNNSSEITGIMLQTPLPASLNASHLVNAIDFDKDVEGIHNYNLGKLISKEEGVRPCTPKAVISMLKAHDILIEGQKVTIIGRSMTVGSPLALMMTAENATVTVCHTRTRNLKEEALRADILVAAVGKREFVTADMVHKDMVVIDVGINFDENGKMLGDVHEEARNHCRLASAVPGGIGVITVAELFDNLRILSQKA</sequence>
<gene>
    <name evidence="1" type="primary">folD2</name>
    <name type="ordered locus">Swol_1474</name>
</gene>
<comment type="function">
    <text evidence="1">Catalyzes the oxidation of 5,10-methylenetetrahydrofolate to 5,10-methenyltetrahydrofolate and then the hydrolysis of 5,10-methenyltetrahydrofolate to 10-formyltetrahydrofolate.</text>
</comment>
<comment type="catalytic activity">
    <reaction evidence="1">
        <text>(6R)-5,10-methylene-5,6,7,8-tetrahydrofolate + NADP(+) = (6R)-5,10-methenyltetrahydrofolate + NADPH</text>
        <dbReference type="Rhea" id="RHEA:22812"/>
        <dbReference type="ChEBI" id="CHEBI:15636"/>
        <dbReference type="ChEBI" id="CHEBI:57455"/>
        <dbReference type="ChEBI" id="CHEBI:57783"/>
        <dbReference type="ChEBI" id="CHEBI:58349"/>
        <dbReference type="EC" id="1.5.1.5"/>
    </reaction>
</comment>
<comment type="catalytic activity">
    <reaction evidence="1">
        <text>(6R)-5,10-methenyltetrahydrofolate + H2O = (6R)-10-formyltetrahydrofolate + H(+)</text>
        <dbReference type="Rhea" id="RHEA:23700"/>
        <dbReference type="ChEBI" id="CHEBI:15377"/>
        <dbReference type="ChEBI" id="CHEBI:15378"/>
        <dbReference type="ChEBI" id="CHEBI:57455"/>
        <dbReference type="ChEBI" id="CHEBI:195366"/>
        <dbReference type="EC" id="3.5.4.9"/>
    </reaction>
</comment>
<comment type="pathway">
    <text evidence="1">One-carbon metabolism; tetrahydrofolate interconversion.</text>
</comment>
<comment type="subunit">
    <text evidence="1">Homodimer.</text>
</comment>
<comment type="similarity">
    <text evidence="1">Belongs to the tetrahydrofolate dehydrogenase/cyclohydrolase family.</text>
</comment>
<evidence type="ECO:0000255" key="1">
    <source>
        <dbReference type="HAMAP-Rule" id="MF_01576"/>
    </source>
</evidence>
<protein>
    <recommendedName>
        <fullName evidence="1">Bifunctional protein FolD 2</fullName>
    </recommendedName>
    <domain>
        <recommendedName>
            <fullName evidence="1">Methylenetetrahydrofolate dehydrogenase</fullName>
            <ecNumber evidence="1">1.5.1.5</ecNumber>
        </recommendedName>
    </domain>
    <domain>
        <recommendedName>
            <fullName evidence="1">Methenyltetrahydrofolate cyclohydrolase</fullName>
            <ecNumber evidence="1">3.5.4.9</ecNumber>
        </recommendedName>
    </domain>
</protein>
<feature type="chain" id="PRO_0000268540" description="Bifunctional protein FolD 2">
    <location>
        <begin position="1"/>
        <end position="272"/>
    </location>
</feature>
<feature type="binding site" evidence="1">
    <location>
        <begin position="157"/>
        <end position="159"/>
    </location>
    <ligand>
        <name>NADP(+)</name>
        <dbReference type="ChEBI" id="CHEBI:58349"/>
    </ligand>
</feature>
<feature type="binding site" evidence="1">
    <location>
        <position position="182"/>
    </location>
    <ligand>
        <name>NADP(+)</name>
        <dbReference type="ChEBI" id="CHEBI:58349"/>
    </ligand>
</feature>
<feature type="binding site" evidence="1">
    <location>
        <position position="223"/>
    </location>
    <ligand>
        <name>NADP(+)</name>
        <dbReference type="ChEBI" id="CHEBI:58349"/>
    </ligand>
</feature>
<keyword id="KW-0028">Amino-acid biosynthesis</keyword>
<keyword id="KW-0368">Histidine biosynthesis</keyword>
<keyword id="KW-0378">Hydrolase</keyword>
<keyword id="KW-0486">Methionine biosynthesis</keyword>
<keyword id="KW-0511">Multifunctional enzyme</keyword>
<keyword id="KW-0521">NADP</keyword>
<keyword id="KW-0554">One-carbon metabolism</keyword>
<keyword id="KW-0560">Oxidoreductase</keyword>
<keyword id="KW-0658">Purine biosynthesis</keyword>
<keyword id="KW-1185">Reference proteome</keyword>
<dbReference type="EC" id="1.5.1.5" evidence="1"/>
<dbReference type="EC" id="3.5.4.9" evidence="1"/>
<dbReference type="EMBL" id="CP000448">
    <property type="protein sequence ID" value="ABI68779.1"/>
    <property type="molecule type" value="Genomic_DNA"/>
</dbReference>
<dbReference type="RefSeq" id="WP_011640878.1">
    <property type="nucleotide sequence ID" value="NC_008346.1"/>
</dbReference>
<dbReference type="SMR" id="Q0AWX5"/>
<dbReference type="STRING" id="335541.Swol_1474"/>
<dbReference type="KEGG" id="swo:Swol_1474"/>
<dbReference type="eggNOG" id="COG0190">
    <property type="taxonomic scope" value="Bacteria"/>
</dbReference>
<dbReference type="HOGENOM" id="CLU_034045_2_1_9"/>
<dbReference type="OrthoDB" id="9803580at2"/>
<dbReference type="UniPathway" id="UPA00193"/>
<dbReference type="Proteomes" id="UP000001968">
    <property type="component" value="Chromosome"/>
</dbReference>
<dbReference type="GO" id="GO:0005829">
    <property type="term" value="C:cytosol"/>
    <property type="evidence" value="ECO:0007669"/>
    <property type="project" value="TreeGrafter"/>
</dbReference>
<dbReference type="GO" id="GO:0004477">
    <property type="term" value="F:methenyltetrahydrofolate cyclohydrolase activity"/>
    <property type="evidence" value="ECO:0007669"/>
    <property type="project" value="UniProtKB-UniRule"/>
</dbReference>
<dbReference type="GO" id="GO:0004488">
    <property type="term" value="F:methylenetetrahydrofolate dehydrogenase (NADP+) activity"/>
    <property type="evidence" value="ECO:0007669"/>
    <property type="project" value="UniProtKB-UniRule"/>
</dbReference>
<dbReference type="GO" id="GO:0000105">
    <property type="term" value="P:L-histidine biosynthetic process"/>
    <property type="evidence" value="ECO:0007669"/>
    <property type="project" value="UniProtKB-KW"/>
</dbReference>
<dbReference type="GO" id="GO:0009086">
    <property type="term" value="P:methionine biosynthetic process"/>
    <property type="evidence" value="ECO:0007669"/>
    <property type="project" value="UniProtKB-KW"/>
</dbReference>
<dbReference type="GO" id="GO:0006164">
    <property type="term" value="P:purine nucleotide biosynthetic process"/>
    <property type="evidence" value="ECO:0007669"/>
    <property type="project" value="UniProtKB-KW"/>
</dbReference>
<dbReference type="GO" id="GO:0035999">
    <property type="term" value="P:tetrahydrofolate interconversion"/>
    <property type="evidence" value="ECO:0007669"/>
    <property type="project" value="UniProtKB-UniRule"/>
</dbReference>
<dbReference type="CDD" id="cd01080">
    <property type="entry name" value="NAD_bind_m-THF_DH_Cyclohyd"/>
    <property type="match status" value="1"/>
</dbReference>
<dbReference type="FunFam" id="3.40.50.10860:FF:000005">
    <property type="entry name" value="C-1-tetrahydrofolate synthase, cytoplasmic, putative"/>
    <property type="match status" value="1"/>
</dbReference>
<dbReference type="Gene3D" id="3.40.50.10860">
    <property type="entry name" value="Leucine Dehydrogenase, chain A, domain 1"/>
    <property type="match status" value="1"/>
</dbReference>
<dbReference type="Gene3D" id="3.40.50.720">
    <property type="entry name" value="NAD(P)-binding Rossmann-like Domain"/>
    <property type="match status" value="1"/>
</dbReference>
<dbReference type="HAMAP" id="MF_01576">
    <property type="entry name" value="THF_DHG_CYH"/>
    <property type="match status" value="1"/>
</dbReference>
<dbReference type="InterPro" id="IPR046346">
    <property type="entry name" value="Aminoacid_DH-like_N_sf"/>
</dbReference>
<dbReference type="InterPro" id="IPR036291">
    <property type="entry name" value="NAD(P)-bd_dom_sf"/>
</dbReference>
<dbReference type="InterPro" id="IPR000672">
    <property type="entry name" value="THF_DH/CycHdrlase"/>
</dbReference>
<dbReference type="InterPro" id="IPR020630">
    <property type="entry name" value="THF_DH/CycHdrlase_cat_dom"/>
</dbReference>
<dbReference type="InterPro" id="IPR020631">
    <property type="entry name" value="THF_DH/CycHdrlase_NAD-bd_dom"/>
</dbReference>
<dbReference type="PANTHER" id="PTHR48099:SF5">
    <property type="entry name" value="C-1-TETRAHYDROFOLATE SYNTHASE, CYTOPLASMIC"/>
    <property type="match status" value="1"/>
</dbReference>
<dbReference type="PANTHER" id="PTHR48099">
    <property type="entry name" value="C-1-TETRAHYDROFOLATE SYNTHASE, CYTOPLASMIC-RELATED"/>
    <property type="match status" value="1"/>
</dbReference>
<dbReference type="Pfam" id="PF00763">
    <property type="entry name" value="THF_DHG_CYH"/>
    <property type="match status" value="1"/>
</dbReference>
<dbReference type="Pfam" id="PF02882">
    <property type="entry name" value="THF_DHG_CYH_C"/>
    <property type="match status" value="1"/>
</dbReference>
<dbReference type="PRINTS" id="PR00085">
    <property type="entry name" value="THFDHDRGNASE"/>
</dbReference>
<dbReference type="SUPFAM" id="SSF53223">
    <property type="entry name" value="Aminoacid dehydrogenase-like, N-terminal domain"/>
    <property type="match status" value="1"/>
</dbReference>
<dbReference type="SUPFAM" id="SSF51735">
    <property type="entry name" value="NAD(P)-binding Rossmann-fold domains"/>
    <property type="match status" value="1"/>
</dbReference>
<organism>
    <name type="scientific">Syntrophomonas wolfei subsp. wolfei (strain DSM 2245B / Goettingen)</name>
    <dbReference type="NCBI Taxonomy" id="335541"/>
    <lineage>
        <taxon>Bacteria</taxon>
        <taxon>Bacillati</taxon>
        <taxon>Bacillota</taxon>
        <taxon>Clostridia</taxon>
        <taxon>Eubacteriales</taxon>
        <taxon>Syntrophomonadaceae</taxon>
        <taxon>Syntrophomonas</taxon>
    </lineage>
</organism>